<organism>
    <name type="scientific">Lawsonia intracellularis (strain PHE/MN1-00)</name>
    <dbReference type="NCBI Taxonomy" id="363253"/>
    <lineage>
        <taxon>Bacteria</taxon>
        <taxon>Pseudomonadati</taxon>
        <taxon>Thermodesulfobacteriota</taxon>
        <taxon>Desulfovibrionia</taxon>
        <taxon>Desulfovibrionales</taxon>
        <taxon>Desulfovibrionaceae</taxon>
        <taxon>Lawsonia</taxon>
    </lineage>
</organism>
<gene>
    <name type="ordered locus">LI0702</name>
</gene>
<accession>Q1MQH1</accession>
<proteinExistence type="inferred from homology"/>
<sequence>MTQQRVSSVFIETVPIVLASASPRRRSLLEQLGLLFKIVSVDSEPLPLSSEHPLEYVIRAAKVKAFAAAALEPRSVIIAADTVVIYTKDDVFEIIGKPQSGNDSFSMLSRFQGGKHQVITGCCIVWPLEENITSVQYEIFYDTASIQFGQWDKDILSSYVSTGESNDKAGAFSIQGIGAFLIDIIEGNYTTILGLPLPQLVKRLLKRKAIKVVLNKNSEETISSDFLTYSR</sequence>
<evidence type="ECO:0000255" key="1">
    <source>
        <dbReference type="HAMAP-Rule" id="MF_00528"/>
    </source>
</evidence>
<comment type="function">
    <text evidence="1">Nucleoside triphosphate pyrophosphatase that hydrolyzes dTTP and UTP. May have a dual role in cell division arrest and in preventing the incorporation of modified nucleotides into cellular nucleic acids.</text>
</comment>
<comment type="catalytic activity">
    <reaction evidence="1">
        <text>dTTP + H2O = dTMP + diphosphate + H(+)</text>
        <dbReference type="Rhea" id="RHEA:28534"/>
        <dbReference type="ChEBI" id="CHEBI:15377"/>
        <dbReference type="ChEBI" id="CHEBI:15378"/>
        <dbReference type="ChEBI" id="CHEBI:33019"/>
        <dbReference type="ChEBI" id="CHEBI:37568"/>
        <dbReference type="ChEBI" id="CHEBI:63528"/>
        <dbReference type="EC" id="3.6.1.9"/>
    </reaction>
</comment>
<comment type="catalytic activity">
    <reaction evidence="1">
        <text>UTP + H2O = UMP + diphosphate + H(+)</text>
        <dbReference type="Rhea" id="RHEA:29395"/>
        <dbReference type="ChEBI" id="CHEBI:15377"/>
        <dbReference type="ChEBI" id="CHEBI:15378"/>
        <dbReference type="ChEBI" id="CHEBI:33019"/>
        <dbReference type="ChEBI" id="CHEBI:46398"/>
        <dbReference type="ChEBI" id="CHEBI:57865"/>
        <dbReference type="EC" id="3.6.1.9"/>
    </reaction>
</comment>
<comment type="cofactor">
    <cofactor evidence="1">
        <name>a divalent metal cation</name>
        <dbReference type="ChEBI" id="CHEBI:60240"/>
    </cofactor>
</comment>
<comment type="subcellular location">
    <subcellularLocation>
        <location evidence="1">Cytoplasm</location>
    </subcellularLocation>
</comment>
<comment type="similarity">
    <text evidence="1">Belongs to the Maf family. YhdE subfamily.</text>
</comment>
<protein>
    <recommendedName>
        <fullName evidence="1">dTTP/UTP pyrophosphatase</fullName>
        <shortName evidence="1">dTTPase/UTPase</shortName>
        <ecNumber evidence="1">3.6.1.9</ecNumber>
    </recommendedName>
    <alternativeName>
        <fullName evidence="1">Nucleoside triphosphate pyrophosphatase</fullName>
    </alternativeName>
    <alternativeName>
        <fullName evidence="1">Nucleotide pyrophosphatase</fullName>
        <shortName evidence="1">Nucleotide PPase</shortName>
    </alternativeName>
</protein>
<keyword id="KW-0963">Cytoplasm</keyword>
<keyword id="KW-0378">Hydrolase</keyword>
<keyword id="KW-0546">Nucleotide metabolism</keyword>
<keyword id="KW-1185">Reference proteome</keyword>
<dbReference type="EC" id="3.6.1.9" evidence="1"/>
<dbReference type="EMBL" id="AM180252">
    <property type="protein sequence ID" value="CAJ54756.1"/>
    <property type="molecule type" value="Genomic_DNA"/>
</dbReference>
<dbReference type="RefSeq" id="WP_011526785.1">
    <property type="nucleotide sequence ID" value="NC_008011.1"/>
</dbReference>
<dbReference type="SMR" id="Q1MQH1"/>
<dbReference type="STRING" id="363253.LI0702"/>
<dbReference type="KEGG" id="lip:LI0702"/>
<dbReference type="eggNOG" id="COG0424">
    <property type="taxonomic scope" value="Bacteria"/>
</dbReference>
<dbReference type="HOGENOM" id="CLU_040416_0_0_7"/>
<dbReference type="OrthoDB" id="9807767at2"/>
<dbReference type="Proteomes" id="UP000002430">
    <property type="component" value="Chromosome"/>
</dbReference>
<dbReference type="GO" id="GO:0005737">
    <property type="term" value="C:cytoplasm"/>
    <property type="evidence" value="ECO:0007669"/>
    <property type="project" value="UniProtKB-SubCell"/>
</dbReference>
<dbReference type="GO" id="GO:0036218">
    <property type="term" value="F:dTTP diphosphatase activity"/>
    <property type="evidence" value="ECO:0007669"/>
    <property type="project" value="RHEA"/>
</dbReference>
<dbReference type="GO" id="GO:0036221">
    <property type="term" value="F:UTP diphosphatase activity"/>
    <property type="evidence" value="ECO:0007669"/>
    <property type="project" value="RHEA"/>
</dbReference>
<dbReference type="GO" id="GO:0009117">
    <property type="term" value="P:nucleotide metabolic process"/>
    <property type="evidence" value="ECO:0007669"/>
    <property type="project" value="UniProtKB-KW"/>
</dbReference>
<dbReference type="CDD" id="cd00555">
    <property type="entry name" value="Maf"/>
    <property type="match status" value="1"/>
</dbReference>
<dbReference type="Gene3D" id="3.90.950.10">
    <property type="match status" value="1"/>
</dbReference>
<dbReference type="HAMAP" id="MF_00528">
    <property type="entry name" value="Maf"/>
    <property type="match status" value="1"/>
</dbReference>
<dbReference type="InterPro" id="IPR029001">
    <property type="entry name" value="ITPase-like_fam"/>
</dbReference>
<dbReference type="InterPro" id="IPR003697">
    <property type="entry name" value="Maf-like"/>
</dbReference>
<dbReference type="NCBIfam" id="TIGR00172">
    <property type="entry name" value="maf"/>
    <property type="match status" value="1"/>
</dbReference>
<dbReference type="PANTHER" id="PTHR43213">
    <property type="entry name" value="BIFUNCTIONAL DTTP/UTP PYROPHOSPHATASE/METHYLTRANSFERASE PROTEIN-RELATED"/>
    <property type="match status" value="1"/>
</dbReference>
<dbReference type="PANTHER" id="PTHR43213:SF5">
    <property type="entry name" value="BIFUNCTIONAL DTTP_UTP PYROPHOSPHATASE_METHYLTRANSFERASE PROTEIN-RELATED"/>
    <property type="match status" value="1"/>
</dbReference>
<dbReference type="Pfam" id="PF02545">
    <property type="entry name" value="Maf"/>
    <property type="match status" value="1"/>
</dbReference>
<dbReference type="PIRSF" id="PIRSF006305">
    <property type="entry name" value="Maf"/>
    <property type="match status" value="1"/>
</dbReference>
<dbReference type="SUPFAM" id="SSF52972">
    <property type="entry name" value="ITPase-like"/>
    <property type="match status" value="1"/>
</dbReference>
<name>NTPPA_LAWIP</name>
<reference key="1">
    <citation type="submission" date="2005-11" db="EMBL/GenBank/DDBJ databases">
        <title>The complete genome sequence of Lawsonia intracellularis: the causative agent of proliferative enteropathy.</title>
        <authorList>
            <person name="Kaur K."/>
            <person name="Zhang Q."/>
            <person name="Beckler D."/>
            <person name="Munir S."/>
            <person name="Li L."/>
            <person name="Kinsley K."/>
            <person name="Herron L."/>
            <person name="Peterson A."/>
            <person name="May B."/>
            <person name="Singh S."/>
            <person name="Gebhart C."/>
            <person name="Kapur V."/>
        </authorList>
    </citation>
    <scope>NUCLEOTIDE SEQUENCE [LARGE SCALE GENOMIC DNA]</scope>
    <source>
        <strain>PHE/MN1-00</strain>
    </source>
</reference>
<feature type="chain" id="PRO_0000267328" description="dTTP/UTP pyrophosphatase">
    <location>
        <begin position="1"/>
        <end position="231"/>
    </location>
</feature>
<feature type="active site" description="Proton acceptor" evidence="1">
    <location>
        <position position="81"/>
    </location>
</feature>
<feature type="site" description="Important for substrate specificity" evidence="1">
    <location>
        <position position="24"/>
    </location>
</feature>
<feature type="site" description="Important for substrate specificity" evidence="1">
    <location>
        <position position="82"/>
    </location>
</feature>
<feature type="site" description="Important for substrate specificity" evidence="1">
    <location>
        <position position="175"/>
    </location>
</feature>